<organism>
    <name type="scientific">Rubrobacter xylanophilus (strain DSM 9941 / JCM 11954 / NBRC 16129 / PRD-1)</name>
    <dbReference type="NCBI Taxonomy" id="266117"/>
    <lineage>
        <taxon>Bacteria</taxon>
        <taxon>Bacillati</taxon>
        <taxon>Actinomycetota</taxon>
        <taxon>Rubrobacteria</taxon>
        <taxon>Rubrobacterales</taxon>
        <taxon>Rubrobacteraceae</taxon>
        <taxon>Rubrobacter</taxon>
    </lineage>
</organism>
<reference key="1">
    <citation type="submission" date="2006-06" db="EMBL/GenBank/DDBJ databases">
        <title>Complete sequence of Rubrobacter xylanophilus DSM 9941.</title>
        <authorList>
            <consortium name="US DOE Joint Genome Institute"/>
            <person name="Copeland A."/>
            <person name="Lucas S."/>
            <person name="Lapidus A."/>
            <person name="Barry K."/>
            <person name="Detter J.C."/>
            <person name="Glavina del Rio T."/>
            <person name="Hammon N."/>
            <person name="Israni S."/>
            <person name="Dalin E."/>
            <person name="Tice H."/>
            <person name="Pitluck S."/>
            <person name="Munk A.C."/>
            <person name="Brettin T."/>
            <person name="Bruce D."/>
            <person name="Han C."/>
            <person name="Tapia R."/>
            <person name="Gilna P."/>
            <person name="Schmutz J."/>
            <person name="Larimer F."/>
            <person name="Land M."/>
            <person name="Hauser L."/>
            <person name="Kyrpides N."/>
            <person name="Lykidis A."/>
            <person name="da Costa M.S."/>
            <person name="Rainey F.A."/>
            <person name="Empadinhas N."/>
            <person name="Jolivet E."/>
            <person name="Battista J.R."/>
            <person name="Richardson P."/>
        </authorList>
    </citation>
    <scope>NUCLEOTIDE SEQUENCE [LARGE SCALE GENOMIC DNA]</scope>
    <source>
        <strain>DSM 9941 / JCM 11954 / NBRC 16129 / PRD-1</strain>
    </source>
</reference>
<evidence type="ECO:0000255" key="1">
    <source>
        <dbReference type="HAMAP-Rule" id="MF_00083"/>
    </source>
</evidence>
<comment type="function">
    <text evidence="1">Hydrolyzes ribosome-free peptidyl-tRNAs (with 1 or more amino acids incorporated), which drop off the ribosome during protein synthesis, or as a result of ribosome stalling.</text>
</comment>
<comment type="function">
    <text evidence="1">Catalyzes the release of premature peptidyl moieties from peptidyl-tRNA molecules trapped in stalled 50S ribosomal subunits, and thus maintains levels of free tRNAs and 50S ribosomes.</text>
</comment>
<comment type="catalytic activity">
    <reaction evidence="1">
        <text>an N-acyl-L-alpha-aminoacyl-tRNA + H2O = an N-acyl-L-amino acid + a tRNA + H(+)</text>
        <dbReference type="Rhea" id="RHEA:54448"/>
        <dbReference type="Rhea" id="RHEA-COMP:10123"/>
        <dbReference type="Rhea" id="RHEA-COMP:13883"/>
        <dbReference type="ChEBI" id="CHEBI:15377"/>
        <dbReference type="ChEBI" id="CHEBI:15378"/>
        <dbReference type="ChEBI" id="CHEBI:59874"/>
        <dbReference type="ChEBI" id="CHEBI:78442"/>
        <dbReference type="ChEBI" id="CHEBI:138191"/>
        <dbReference type="EC" id="3.1.1.29"/>
    </reaction>
</comment>
<comment type="subunit">
    <text evidence="1">Monomer.</text>
</comment>
<comment type="subcellular location">
    <subcellularLocation>
        <location evidence="1">Cytoplasm</location>
    </subcellularLocation>
</comment>
<comment type="similarity">
    <text evidence="1">Belongs to the PTH family.</text>
</comment>
<keyword id="KW-0963">Cytoplasm</keyword>
<keyword id="KW-0378">Hydrolase</keyword>
<keyword id="KW-1185">Reference proteome</keyword>
<keyword id="KW-0694">RNA-binding</keyword>
<keyword id="KW-0820">tRNA-binding</keyword>
<name>PTH_RUBXD</name>
<proteinExistence type="inferred from homology"/>
<gene>
    <name evidence="1" type="primary">pth</name>
    <name type="ordered locus">Rxyl_0897</name>
</gene>
<dbReference type="EC" id="3.1.1.29" evidence="1"/>
<dbReference type="EMBL" id="CP000386">
    <property type="protein sequence ID" value="ABG03864.1"/>
    <property type="molecule type" value="Genomic_DNA"/>
</dbReference>
<dbReference type="RefSeq" id="WP_011563882.1">
    <property type="nucleotide sequence ID" value="NC_008148.1"/>
</dbReference>
<dbReference type="SMR" id="Q1AXL4"/>
<dbReference type="STRING" id="266117.Rxyl_0897"/>
<dbReference type="KEGG" id="rxy:Rxyl_0897"/>
<dbReference type="eggNOG" id="COG0193">
    <property type="taxonomic scope" value="Bacteria"/>
</dbReference>
<dbReference type="HOGENOM" id="CLU_062456_4_1_11"/>
<dbReference type="OrthoDB" id="9800507at2"/>
<dbReference type="PhylomeDB" id="Q1AXL4"/>
<dbReference type="Proteomes" id="UP000006637">
    <property type="component" value="Chromosome"/>
</dbReference>
<dbReference type="GO" id="GO:0005737">
    <property type="term" value="C:cytoplasm"/>
    <property type="evidence" value="ECO:0007669"/>
    <property type="project" value="UniProtKB-SubCell"/>
</dbReference>
<dbReference type="GO" id="GO:0004045">
    <property type="term" value="F:peptidyl-tRNA hydrolase activity"/>
    <property type="evidence" value="ECO:0007669"/>
    <property type="project" value="UniProtKB-UniRule"/>
</dbReference>
<dbReference type="GO" id="GO:0000049">
    <property type="term" value="F:tRNA binding"/>
    <property type="evidence" value="ECO:0007669"/>
    <property type="project" value="UniProtKB-UniRule"/>
</dbReference>
<dbReference type="GO" id="GO:0006515">
    <property type="term" value="P:protein quality control for misfolded or incompletely synthesized proteins"/>
    <property type="evidence" value="ECO:0007669"/>
    <property type="project" value="UniProtKB-UniRule"/>
</dbReference>
<dbReference type="GO" id="GO:0072344">
    <property type="term" value="P:rescue of stalled ribosome"/>
    <property type="evidence" value="ECO:0007669"/>
    <property type="project" value="UniProtKB-UniRule"/>
</dbReference>
<dbReference type="CDD" id="cd00462">
    <property type="entry name" value="PTH"/>
    <property type="match status" value="1"/>
</dbReference>
<dbReference type="Gene3D" id="3.40.50.1470">
    <property type="entry name" value="Peptidyl-tRNA hydrolase"/>
    <property type="match status" value="1"/>
</dbReference>
<dbReference type="HAMAP" id="MF_00083">
    <property type="entry name" value="Pept_tRNA_hydro_bact"/>
    <property type="match status" value="1"/>
</dbReference>
<dbReference type="InterPro" id="IPR001328">
    <property type="entry name" value="Pept_tRNA_hydro"/>
</dbReference>
<dbReference type="InterPro" id="IPR018171">
    <property type="entry name" value="Pept_tRNA_hydro_CS"/>
</dbReference>
<dbReference type="InterPro" id="IPR036416">
    <property type="entry name" value="Pept_tRNA_hydro_sf"/>
</dbReference>
<dbReference type="NCBIfam" id="TIGR00447">
    <property type="entry name" value="pth"/>
    <property type="match status" value="1"/>
</dbReference>
<dbReference type="PANTHER" id="PTHR17224">
    <property type="entry name" value="PEPTIDYL-TRNA HYDROLASE"/>
    <property type="match status" value="1"/>
</dbReference>
<dbReference type="PANTHER" id="PTHR17224:SF1">
    <property type="entry name" value="PEPTIDYL-TRNA HYDROLASE"/>
    <property type="match status" value="1"/>
</dbReference>
<dbReference type="Pfam" id="PF01195">
    <property type="entry name" value="Pept_tRNA_hydro"/>
    <property type="match status" value="1"/>
</dbReference>
<dbReference type="SUPFAM" id="SSF53178">
    <property type="entry name" value="Peptidyl-tRNA hydrolase-like"/>
    <property type="match status" value="1"/>
</dbReference>
<dbReference type="PROSITE" id="PS01195">
    <property type="entry name" value="PEPT_TRNA_HYDROL_1"/>
    <property type="match status" value="1"/>
</dbReference>
<dbReference type="PROSITE" id="PS01196">
    <property type="entry name" value="PEPT_TRNA_HYDROL_2"/>
    <property type="match status" value="1"/>
</dbReference>
<feature type="chain" id="PRO_0000264099" description="Peptidyl-tRNA hydrolase">
    <location>
        <begin position="1"/>
        <end position="172"/>
    </location>
</feature>
<feature type="active site" description="Proton acceptor" evidence="1">
    <location>
        <position position="15"/>
    </location>
</feature>
<feature type="binding site" evidence="1">
    <location>
        <position position="10"/>
    </location>
    <ligand>
        <name>tRNA</name>
        <dbReference type="ChEBI" id="CHEBI:17843"/>
    </ligand>
</feature>
<feature type="binding site" evidence="1">
    <location>
        <position position="59"/>
    </location>
    <ligand>
        <name>tRNA</name>
        <dbReference type="ChEBI" id="CHEBI:17843"/>
    </ligand>
</feature>
<feature type="binding site" evidence="1">
    <location>
        <position position="61"/>
    </location>
    <ligand>
        <name>tRNA</name>
        <dbReference type="ChEBI" id="CHEBI:17843"/>
    </ligand>
</feature>
<feature type="binding site" evidence="1">
    <location>
        <position position="101"/>
    </location>
    <ligand>
        <name>tRNA</name>
        <dbReference type="ChEBI" id="CHEBI:17843"/>
    </ligand>
</feature>
<feature type="site" description="Discriminates between blocked and unblocked aminoacyl-tRNA" evidence="1">
    <location>
        <position position="5"/>
    </location>
</feature>
<feature type="site" description="Stabilizes the basic form of H active site to accept a proton" evidence="1">
    <location>
        <position position="80"/>
    </location>
</feature>
<sequence>MGLGNPGRRYALTRHNAGHMVLDELFRRHGGRWRRARRAEAAEVSVEGREAVLLKPATFMNESGEALSGYRAEDLIVVHDDLDLPAGTVRVKVGGGAGGHNGLRSVISRVGNGFVRVRVGIGRPPEGADVTGYVLGRMDRAAREAIPRAADAVEAVLEEGPEAAMNRFNARA</sequence>
<accession>Q1AXL4</accession>
<protein>
    <recommendedName>
        <fullName evidence="1">Peptidyl-tRNA hydrolase</fullName>
        <shortName evidence="1">Pth</shortName>
        <ecNumber evidence="1">3.1.1.29</ecNumber>
    </recommendedName>
</protein>